<keyword id="KW-0004">4Fe-4S</keyword>
<keyword id="KW-0997">Cell inner membrane</keyword>
<keyword id="KW-1003">Cell membrane</keyword>
<keyword id="KW-0408">Iron</keyword>
<keyword id="KW-0411">Iron-sulfur</keyword>
<keyword id="KW-0472">Membrane</keyword>
<keyword id="KW-0479">Metal-binding</keyword>
<keyword id="KW-0520">NAD</keyword>
<keyword id="KW-0874">Quinone</keyword>
<keyword id="KW-0677">Repeat</keyword>
<keyword id="KW-1278">Translocase</keyword>
<keyword id="KW-0830">Ubiquinone</keyword>
<reference key="1">
    <citation type="journal article" date="2004" name="Nat. Biotechnol.">
        <title>Complete genome sequence of the metabolically versatile photosynthetic bacterium Rhodopseudomonas palustris.</title>
        <authorList>
            <person name="Larimer F.W."/>
            <person name="Chain P."/>
            <person name="Hauser L."/>
            <person name="Lamerdin J.E."/>
            <person name="Malfatti S."/>
            <person name="Do L."/>
            <person name="Land M.L."/>
            <person name="Pelletier D.A."/>
            <person name="Beatty J.T."/>
            <person name="Lang A.S."/>
            <person name="Tabita F.R."/>
            <person name="Gibson J.L."/>
            <person name="Hanson T.E."/>
            <person name="Bobst C."/>
            <person name="Torres y Torres J.L."/>
            <person name="Peres C."/>
            <person name="Harrison F.H."/>
            <person name="Gibson J."/>
            <person name="Harwood C.S."/>
        </authorList>
    </citation>
    <scope>NUCLEOTIDE SEQUENCE [LARGE SCALE GENOMIC DNA]</scope>
    <source>
        <strain>ATCC BAA-98 / CGA009</strain>
    </source>
</reference>
<accession>Q6N1Z5</accession>
<evidence type="ECO:0000255" key="1">
    <source>
        <dbReference type="HAMAP-Rule" id="MF_01351"/>
    </source>
</evidence>
<evidence type="ECO:0000256" key="2">
    <source>
        <dbReference type="SAM" id="MobiDB-lite"/>
    </source>
</evidence>
<name>NUOI2_RHOPA</name>
<dbReference type="EC" id="7.1.1.-" evidence="1"/>
<dbReference type="EMBL" id="BX572606">
    <property type="protein sequence ID" value="CAE29698.1"/>
    <property type="molecule type" value="Genomic_DNA"/>
</dbReference>
<dbReference type="RefSeq" id="WP_011159792.1">
    <property type="nucleotide sequence ID" value="NZ_CP116810.1"/>
</dbReference>
<dbReference type="SMR" id="Q6N1Z5"/>
<dbReference type="STRING" id="258594.RPA4257"/>
<dbReference type="GeneID" id="66895383"/>
<dbReference type="eggNOG" id="COG1143">
    <property type="taxonomic scope" value="Bacteria"/>
</dbReference>
<dbReference type="HOGENOM" id="CLU_067218_4_3_5"/>
<dbReference type="PhylomeDB" id="Q6N1Z5"/>
<dbReference type="GO" id="GO:0005886">
    <property type="term" value="C:plasma membrane"/>
    <property type="evidence" value="ECO:0007669"/>
    <property type="project" value="UniProtKB-SubCell"/>
</dbReference>
<dbReference type="GO" id="GO:0051539">
    <property type="term" value="F:4 iron, 4 sulfur cluster binding"/>
    <property type="evidence" value="ECO:0007669"/>
    <property type="project" value="UniProtKB-KW"/>
</dbReference>
<dbReference type="GO" id="GO:0005506">
    <property type="term" value="F:iron ion binding"/>
    <property type="evidence" value="ECO:0007669"/>
    <property type="project" value="UniProtKB-UniRule"/>
</dbReference>
<dbReference type="GO" id="GO:0050136">
    <property type="term" value="F:NADH:ubiquinone reductase (non-electrogenic) activity"/>
    <property type="evidence" value="ECO:0007669"/>
    <property type="project" value="UniProtKB-UniRule"/>
</dbReference>
<dbReference type="GO" id="GO:0048038">
    <property type="term" value="F:quinone binding"/>
    <property type="evidence" value="ECO:0007669"/>
    <property type="project" value="UniProtKB-KW"/>
</dbReference>
<dbReference type="GO" id="GO:0009060">
    <property type="term" value="P:aerobic respiration"/>
    <property type="evidence" value="ECO:0007669"/>
    <property type="project" value="TreeGrafter"/>
</dbReference>
<dbReference type="FunFam" id="3.30.70.3270:FF:000002">
    <property type="entry name" value="NADH-quinone oxidoreductase subunit I"/>
    <property type="match status" value="1"/>
</dbReference>
<dbReference type="Gene3D" id="3.30.70.3270">
    <property type="match status" value="1"/>
</dbReference>
<dbReference type="HAMAP" id="MF_01351">
    <property type="entry name" value="NDH1_NuoI"/>
    <property type="match status" value="1"/>
</dbReference>
<dbReference type="InterPro" id="IPR017896">
    <property type="entry name" value="4Fe4S_Fe-S-bd"/>
</dbReference>
<dbReference type="InterPro" id="IPR017900">
    <property type="entry name" value="4Fe4S_Fe_S_CS"/>
</dbReference>
<dbReference type="InterPro" id="IPR010226">
    <property type="entry name" value="NADH_quinone_OxRdtase_chainI"/>
</dbReference>
<dbReference type="NCBIfam" id="TIGR01971">
    <property type="entry name" value="NuoI"/>
    <property type="match status" value="1"/>
</dbReference>
<dbReference type="NCBIfam" id="NF004536">
    <property type="entry name" value="PRK05888.1-1"/>
    <property type="match status" value="1"/>
</dbReference>
<dbReference type="PANTHER" id="PTHR10849:SF20">
    <property type="entry name" value="NADH DEHYDROGENASE [UBIQUINONE] IRON-SULFUR PROTEIN 8, MITOCHONDRIAL"/>
    <property type="match status" value="1"/>
</dbReference>
<dbReference type="PANTHER" id="PTHR10849">
    <property type="entry name" value="NADH DEHYDROGENASE UBIQUINONE IRON-SULFUR PROTEIN 8, MITOCHONDRIAL"/>
    <property type="match status" value="1"/>
</dbReference>
<dbReference type="Pfam" id="PF12838">
    <property type="entry name" value="Fer4_7"/>
    <property type="match status" value="1"/>
</dbReference>
<dbReference type="SUPFAM" id="SSF54862">
    <property type="entry name" value="4Fe-4S ferredoxins"/>
    <property type="match status" value="1"/>
</dbReference>
<dbReference type="PROSITE" id="PS00198">
    <property type="entry name" value="4FE4S_FER_1"/>
    <property type="match status" value="2"/>
</dbReference>
<dbReference type="PROSITE" id="PS51379">
    <property type="entry name" value="4FE4S_FER_2"/>
    <property type="match status" value="2"/>
</dbReference>
<comment type="function">
    <text evidence="1">NDH-1 shuttles electrons from NADH, via FMN and iron-sulfur (Fe-S) centers, to quinones in the respiratory chain. The immediate electron acceptor for the enzyme in this species is believed to be ubiquinone. Couples the redox reaction to proton translocation (for every two electrons transferred, four hydrogen ions are translocated across the cytoplasmic membrane), and thus conserves the redox energy in a proton gradient.</text>
</comment>
<comment type="catalytic activity">
    <reaction evidence="1">
        <text>a quinone + NADH + 5 H(+)(in) = a quinol + NAD(+) + 4 H(+)(out)</text>
        <dbReference type="Rhea" id="RHEA:57888"/>
        <dbReference type="ChEBI" id="CHEBI:15378"/>
        <dbReference type="ChEBI" id="CHEBI:24646"/>
        <dbReference type="ChEBI" id="CHEBI:57540"/>
        <dbReference type="ChEBI" id="CHEBI:57945"/>
        <dbReference type="ChEBI" id="CHEBI:132124"/>
    </reaction>
</comment>
<comment type="cofactor">
    <cofactor evidence="1">
        <name>[4Fe-4S] cluster</name>
        <dbReference type="ChEBI" id="CHEBI:49883"/>
    </cofactor>
    <text evidence="1">Binds 2 [4Fe-4S] clusters per subunit.</text>
</comment>
<comment type="subunit">
    <text evidence="1">NDH-1 is composed of 14 different subunits. Subunits NuoA, H, J, K, L, M, N constitute the membrane sector of the complex.</text>
</comment>
<comment type="subcellular location">
    <subcellularLocation>
        <location evidence="1">Cell inner membrane</location>
        <topology evidence="1">Peripheral membrane protein</topology>
    </subcellularLocation>
</comment>
<comment type="similarity">
    <text evidence="1">Belongs to the complex I 23 kDa subunit family.</text>
</comment>
<feature type="chain" id="PRO_0000250937" description="NADH-quinone oxidoreductase subunit I 2">
    <location>
        <begin position="1"/>
        <end position="173"/>
    </location>
</feature>
<feature type="domain" description="4Fe-4S ferredoxin-type 1" evidence="1">
    <location>
        <begin position="41"/>
        <end position="73"/>
    </location>
</feature>
<feature type="domain" description="4Fe-4S ferredoxin-type 2" evidence="1">
    <location>
        <begin position="83"/>
        <end position="112"/>
    </location>
</feature>
<feature type="region of interest" description="Disordered" evidence="2">
    <location>
        <begin position="153"/>
        <end position="173"/>
    </location>
</feature>
<feature type="compositionally biased region" description="Basic and acidic residues" evidence="2">
    <location>
        <begin position="153"/>
        <end position="163"/>
    </location>
</feature>
<feature type="binding site" evidence="1">
    <location>
        <position position="53"/>
    </location>
    <ligand>
        <name>[4Fe-4S] cluster</name>
        <dbReference type="ChEBI" id="CHEBI:49883"/>
        <label>1</label>
    </ligand>
</feature>
<feature type="binding site" evidence="1">
    <location>
        <position position="56"/>
    </location>
    <ligand>
        <name>[4Fe-4S] cluster</name>
        <dbReference type="ChEBI" id="CHEBI:49883"/>
        <label>1</label>
    </ligand>
</feature>
<feature type="binding site" evidence="1">
    <location>
        <position position="59"/>
    </location>
    <ligand>
        <name>[4Fe-4S] cluster</name>
        <dbReference type="ChEBI" id="CHEBI:49883"/>
        <label>1</label>
    </ligand>
</feature>
<feature type="binding site" evidence="1">
    <location>
        <position position="63"/>
    </location>
    <ligand>
        <name>[4Fe-4S] cluster</name>
        <dbReference type="ChEBI" id="CHEBI:49883"/>
        <label>2</label>
    </ligand>
</feature>
<feature type="binding site" evidence="1">
    <location>
        <position position="92"/>
    </location>
    <ligand>
        <name>[4Fe-4S] cluster</name>
        <dbReference type="ChEBI" id="CHEBI:49883"/>
        <label>2</label>
    </ligand>
</feature>
<feature type="binding site" evidence="1">
    <location>
        <position position="95"/>
    </location>
    <ligand>
        <name>[4Fe-4S] cluster</name>
        <dbReference type="ChEBI" id="CHEBI:49883"/>
        <label>2</label>
    </ligand>
</feature>
<feature type="binding site" evidence="1">
    <location>
        <position position="98"/>
    </location>
    <ligand>
        <name>[4Fe-4S] cluster</name>
        <dbReference type="ChEBI" id="CHEBI:49883"/>
        <label>2</label>
    </ligand>
</feature>
<feature type="binding site" evidence="1">
    <location>
        <position position="102"/>
    </location>
    <ligand>
        <name>[4Fe-4S] cluster</name>
        <dbReference type="ChEBI" id="CHEBI:49883"/>
        <label>1</label>
    </ligand>
</feature>
<proteinExistence type="inferred from homology"/>
<protein>
    <recommendedName>
        <fullName evidence="1">NADH-quinone oxidoreductase subunit I 2</fullName>
        <ecNumber evidence="1">7.1.1.-</ecNumber>
    </recommendedName>
    <alternativeName>
        <fullName evidence="1">NADH dehydrogenase I subunit I 2</fullName>
    </alternativeName>
    <alternativeName>
        <fullName evidence="1">NDH-1 subunit I 2</fullName>
    </alternativeName>
</protein>
<organism>
    <name type="scientific">Rhodopseudomonas palustris (strain ATCC BAA-98 / CGA009)</name>
    <dbReference type="NCBI Taxonomy" id="258594"/>
    <lineage>
        <taxon>Bacteria</taxon>
        <taxon>Pseudomonadati</taxon>
        <taxon>Pseudomonadota</taxon>
        <taxon>Alphaproteobacteria</taxon>
        <taxon>Hyphomicrobiales</taxon>
        <taxon>Nitrobacteraceae</taxon>
        <taxon>Rhodopseudomonas</taxon>
    </lineage>
</organism>
<sequence length="173" mass="19494">MIGFGWLEALLRVGRKLFVKPETQLYPEQKPKLYPRARGRIVLTRDPDGQERCVACNLCATVCPVGCIDLAKAVADDGRWYPEYFRVNFARCIFCGFCEDACPTAAIQLTPDYELSEWRRDALVYEKHDLLISGEGKVRGYRYWSVAGKAIPGKDKGEAEHEAPPVNLKGLLP</sequence>
<gene>
    <name evidence="1" type="primary">nuoI2</name>
    <name type="ordered locus">RPA4257</name>
</gene>